<sequence>MTDTAMLPESWRGVLGDELQQPYFKELTEFVEEERARGPVYPPREEVFAALAATPYERVKVLVLGQDPYHGEGQGHGLCFSVRPGVKTPPSLRNIYKEMKEELGTPIPDNGYLMPWAEQGVLLLNAVLTVRSGEANSHKGKGWEKFTDAVIRAVADRPDPAVFVLWGNYAQKKLPLIDEERHVVVKGAHPSPLSAKKFFGSRPFTQINEAVAEQGHTPIDWTIPNLG</sequence>
<reference key="1">
    <citation type="journal article" date="2001" name="Proc. Natl. Acad. Sci. U.S.A.">
        <title>Genome sequence of an industrial microorganism Streptomyces avermitilis: deducing the ability of producing secondary metabolites.</title>
        <authorList>
            <person name="Omura S."/>
            <person name="Ikeda H."/>
            <person name="Ishikawa J."/>
            <person name="Hanamoto A."/>
            <person name="Takahashi C."/>
            <person name="Shinose M."/>
            <person name="Takahashi Y."/>
            <person name="Horikawa H."/>
            <person name="Nakazawa H."/>
            <person name="Osonoe T."/>
            <person name="Kikuchi H."/>
            <person name="Shiba T."/>
            <person name="Sakaki Y."/>
            <person name="Hattori M."/>
        </authorList>
    </citation>
    <scope>NUCLEOTIDE SEQUENCE [LARGE SCALE GENOMIC DNA]</scope>
    <source>
        <strain>ATCC 31267 / DSM 46492 / JCM 5070 / NBRC 14893 / NCIMB 12804 / NRRL 8165 / MA-4680</strain>
    </source>
</reference>
<reference key="2">
    <citation type="journal article" date="2003" name="Nat. Biotechnol.">
        <title>Complete genome sequence and comparative analysis of the industrial microorganism Streptomyces avermitilis.</title>
        <authorList>
            <person name="Ikeda H."/>
            <person name="Ishikawa J."/>
            <person name="Hanamoto A."/>
            <person name="Shinose M."/>
            <person name="Kikuchi H."/>
            <person name="Shiba T."/>
            <person name="Sakaki Y."/>
            <person name="Hattori M."/>
            <person name="Omura S."/>
        </authorList>
    </citation>
    <scope>NUCLEOTIDE SEQUENCE [LARGE SCALE GENOMIC DNA]</scope>
    <source>
        <strain>ATCC 31267 / DSM 46492 / JCM 5070 / NBRC 14893 / NCIMB 12804 / NRRL 8165 / MA-4680</strain>
    </source>
</reference>
<dbReference type="EC" id="3.2.2.27"/>
<dbReference type="EMBL" id="BA000030">
    <property type="protein sequence ID" value="BAC74722.1"/>
    <property type="molecule type" value="Genomic_DNA"/>
</dbReference>
<dbReference type="RefSeq" id="WP_010988406.1">
    <property type="nucleotide sequence ID" value="NZ_JZJK01000085.1"/>
</dbReference>
<dbReference type="SMR" id="Q827B3"/>
<dbReference type="GeneID" id="41544086"/>
<dbReference type="KEGG" id="sma:SAVERM_7011"/>
<dbReference type="eggNOG" id="COG0692">
    <property type="taxonomic scope" value="Bacteria"/>
</dbReference>
<dbReference type="HOGENOM" id="CLU_032162_3_0_11"/>
<dbReference type="OrthoDB" id="9804372at2"/>
<dbReference type="Proteomes" id="UP000000428">
    <property type="component" value="Chromosome"/>
</dbReference>
<dbReference type="GO" id="GO:0005737">
    <property type="term" value="C:cytoplasm"/>
    <property type="evidence" value="ECO:0007669"/>
    <property type="project" value="UniProtKB-SubCell"/>
</dbReference>
<dbReference type="GO" id="GO:0004844">
    <property type="term" value="F:uracil DNA N-glycosylase activity"/>
    <property type="evidence" value="ECO:0007669"/>
    <property type="project" value="UniProtKB-UniRule"/>
</dbReference>
<dbReference type="GO" id="GO:0097510">
    <property type="term" value="P:base-excision repair, AP site formation via deaminated base removal"/>
    <property type="evidence" value="ECO:0007669"/>
    <property type="project" value="TreeGrafter"/>
</dbReference>
<dbReference type="CDD" id="cd10027">
    <property type="entry name" value="UDG-F1-like"/>
    <property type="match status" value="1"/>
</dbReference>
<dbReference type="FunFam" id="3.40.470.10:FF:000001">
    <property type="entry name" value="Uracil-DNA glycosylase"/>
    <property type="match status" value="1"/>
</dbReference>
<dbReference type="Gene3D" id="3.40.470.10">
    <property type="entry name" value="Uracil-DNA glycosylase-like domain"/>
    <property type="match status" value="1"/>
</dbReference>
<dbReference type="HAMAP" id="MF_00148">
    <property type="entry name" value="UDG"/>
    <property type="match status" value="1"/>
</dbReference>
<dbReference type="InterPro" id="IPR002043">
    <property type="entry name" value="UDG_fam1"/>
</dbReference>
<dbReference type="InterPro" id="IPR018085">
    <property type="entry name" value="Ura-DNA_Glyclase_AS"/>
</dbReference>
<dbReference type="InterPro" id="IPR005122">
    <property type="entry name" value="Uracil-DNA_glycosylase-like"/>
</dbReference>
<dbReference type="InterPro" id="IPR036895">
    <property type="entry name" value="Uracil-DNA_glycosylase-like_sf"/>
</dbReference>
<dbReference type="NCBIfam" id="NF003588">
    <property type="entry name" value="PRK05254.1-1"/>
    <property type="match status" value="1"/>
</dbReference>
<dbReference type="NCBIfam" id="NF003589">
    <property type="entry name" value="PRK05254.1-2"/>
    <property type="match status" value="1"/>
</dbReference>
<dbReference type="NCBIfam" id="NF003591">
    <property type="entry name" value="PRK05254.1-4"/>
    <property type="match status" value="1"/>
</dbReference>
<dbReference type="NCBIfam" id="NF003592">
    <property type="entry name" value="PRK05254.1-5"/>
    <property type="match status" value="1"/>
</dbReference>
<dbReference type="NCBIfam" id="TIGR00628">
    <property type="entry name" value="ung"/>
    <property type="match status" value="1"/>
</dbReference>
<dbReference type="PANTHER" id="PTHR11264">
    <property type="entry name" value="URACIL-DNA GLYCOSYLASE"/>
    <property type="match status" value="1"/>
</dbReference>
<dbReference type="PANTHER" id="PTHR11264:SF0">
    <property type="entry name" value="URACIL-DNA GLYCOSYLASE"/>
    <property type="match status" value="1"/>
</dbReference>
<dbReference type="Pfam" id="PF03167">
    <property type="entry name" value="UDG"/>
    <property type="match status" value="1"/>
</dbReference>
<dbReference type="SMART" id="SM00986">
    <property type="entry name" value="UDG"/>
    <property type="match status" value="1"/>
</dbReference>
<dbReference type="SMART" id="SM00987">
    <property type="entry name" value="UreE_C"/>
    <property type="match status" value="1"/>
</dbReference>
<dbReference type="SUPFAM" id="SSF52141">
    <property type="entry name" value="Uracil-DNA glycosylase-like"/>
    <property type="match status" value="1"/>
</dbReference>
<dbReference type="PROSITE" id="PS00130">
    <property type="entry name" value="U_DNA_GLYCOSYLASE"/>
    <property type="match status" value="1"/>
</dbReference>
<accession>Q827B3</accession>
<proteinExistence type="inferred from homology"/>
<gene>
    <name type="primary">ung2</name>
    <name type="ordered locus">SAV_7011</name>
</gene>
<organism>
    <name type="scientific">Streptomyces avermitilis (strain ATCC 31267 / DSM 46492 / JCM 5070 / NBRC 14893 / NCIMB 12804 / NRRL 8165 / MA-4680)</name>
    <dbReference type="NCBI Taxonomy" id="227882"/>
    <lineage>
        <taxon>Bacteria</taxon>
        <taxon>Bacillati</taxon>
        <taxon>Actinomycetota</taxon>
        <taxon>Actinomycetes</taxon>
        <taxon>Kitasatosporales</taxon>
        <taxon>Streptomycetaceae</taxon>
        <taxon>Streptomyces</taxon>
    </lineage>
</organism>
<comment type="function">
    <text evidence="1">Excises uracil residues from the DNA which can arise as a result of misincorporation of dUMP residues by DNA polymerase or due to deamination of cytosine.</text>
</comment>
<comment type="catalytic activity">
    <reaction>
        <text>Hydrolyzes single-stranded DNA or mismatched double-stranded DNA and polynucleotides, releasing free uracil.</text>
        <dbReference type="EC" id="3.2.2.27"/>
    </reaction>
</comment>
<comment type="subcellular location">
    <subcellularLocation>
        <location evidence="1">Cytoplasm</location>
    </subcellularLocation>
</comment>
<comment type="similarity">
    <text evidence="2">Belongs to the uracil-DNA glycosylase (UDG) superfamily. UNG family.</text>
</comment>
<keyword id="KW-0963">Cytoplasm</keyword>
<keyword id="KW-0227">DNA damage</keyword>
<keyword id="KW-0234">DNA repair</keyword>
<keyword id="KW-0378">Hydrolase</keyword>
<keyword id="KW-1185">Reference proteome</keyword>
<evidence type="ECO:0000250" key="1"/>
<evidence type="ECO:0000305" key="2"/>
<name>UNG2_STRAW</name>
<protein>
    <recommendedName>
        <fullName>Uracil-DNA glycosylase 2</fullName>
        <shortName>UDG 2</shortName>
        <ecNumber>3.2.2.27</ecNumber>
    </recommendedName>
</protein>
<feature type="chain" id="PRO_0000176148" description="Uracil-DNA glycosylase 2">
    <location>
        <begin position="1"/>
        <end position="227"/>
    </location>
</feature>
<feature type="active site" description="Proton acceptor" evidence="1">
    <location>
        <position position="67"/>
    </location>
</feature>